<accession>A4YBY3</accession>
<gene>
    <name evidence="1" type="primary">rplC</name>
    <name type="ordered locus">Sputcn32_3759</name>
</gene>
<reference key="1">
    <citation type="submission" date="2007-04" db="EMBL/GenBank/DDBJ databases">
        <title>Complete sequence of Shewanella putrefaciens CN-32.</title>
        <authorList>
            <consortium name="US DOE Joint Genome Institute"/>
            <person name="Copeland A."/>
            <person name="Lucas S."/>
            <person name="Lapidus A."/>
            <person name="Barry K."/>
            <person name="Detter J.C."/>
            <person name="Glavina del Rio T."/>
            <person name="Hammon N."/>
            <person name="Israni S."/>
            <person name="Dalin E."/>
            <person name="Tice H."/>
            <person name="Pitluck S."/>
            <person name="Chain P."/>
            <person name="Malfatti S."/>
            <person name="Shin M."/>
            <person name="Vergez L."/>
            <person name="Schmutz J."/>
            <person name="Larimer F."/>
            <person name="Land M."/>
            <person name="Hauser L."/>
            <person name="Kyrpides N."/>
            <person name="Mikhailova N."/>
            <person name="Romine M.F."/>
            <person name="Fredrickson J."/>
            <person name="Tiedje J."/>
            <person name="Richardson P."/>
        </authorList>
    </citation>
    <scope>NUCLEOTIDE SEQUENCE [LARGE SCALE GENOMIC DNA]</scope>
    <source>
        <strain>CN-32 / ATCC BAA-453</strain>
    </source>
</reference>
<organism>
    <name type="scientific">Shewanella putrefaciens (strain CN-32 / ATCC BAA-453)</name>
    <dbReference type="NCBI Taxonomy" id="319224"/>
    <lineage>
        <taxon>Bacteria</taxon>
        <taxon>Pseudomonadati</taxon>
        <taxon>Pseudomonadota</taxon>
        <taxon>Gammaproteobacteria</taxon>
        <taxon>Alteromonadales</taxon>
        <taxon>Shewanellaceae</taxon>
        <taxon>Shewanella</taxon>
    </lineage>
</organism>
<dbReference type="EMBL" id="CP000681">
    <property type="protein sequence ID" value="ABP77466.1"/>
    <property type="molecule type" value="Genomic_DNA"/>
</dbReference>
<dbReference type="SMR" id="A4YBY3"/>
<dbReference type="STRING" id="319224.Sputcn32_3759"/>
<dbReference type="KEGG" id="spc:Sputcn32_3759"/>
<dbReference type="eggNOG" id="COG0087">
    <property type="taxonomic scope" value="Bacteria"/>
</dbReference>
<dbReference type="HOGENOM" id="CLU_044142_4_1_6"/>
<dbReference type="GO" id="GO:0022625">
    <property type="term" value="C:cytosolic large ribosomal subunit"/>
    <property type="evidence" value="ECO:0007669"/>
    <property type="project" value="TreeGrafter"/>
</dbReference>
<dbReference type="GO" id="GO:0019843">
    <property type="term" value="F:rRNA binding"/>
    <property type="evidence" value="ECO:0007669"/>
    <property type="project" value="UniProtKB-UniRule"/>
</dbReference>
<dbReference type="GO" id="GO:0003735">
    <property type="term" value="F:structural constituent of ribosome"/>
    <property type="evidence" value="ECO:0007669"/>
    <property type="project" value="InterPro"/>
</dbReference>
<dbReference type="GO" id="GO:0006412">
    <property type="term" value="P:translation"/>
    <property type="evidence" value="ECO:0007669"/>
    <property type="project" value="UniProtKB-UniRule"/>
</dbReference>
<dbReference type="FunFam" id="2.40.30.10:FF:000004">
    <property type="entry name" value="50S ribosomal protein L3"/>
    <property type="match status" value="1"/>
</dbReference>
<dbReference type="FunFam" id="3.30.160.810:FF:000001">
    <property type="entry name" value="50S ribosomal protein L3"/>
    <property type="match status" value="1"/>
</dbReference>
<dbReference type="Gene3D" id="3.30.160.810">
    <property type="match status" value="1"/>
</dbReference>
<dbReference type="Gene3D" id="2.40.30.10">
    <property type="entry name" value="Translation factors"/>
    <property type="match status" value="1"/>
</dbReference>
<dbReference type="HAMAP" id="MF_01325_B">
    <property type="entry name" value="Ribosomal_uL3_B"/>
    <property type="match status" value="1"/>
</dbReference>
<dbReference type="InterPro" id="IPR000597">
    <property type="entry name" value="Ribosomal_uL3"/>
</dbReference>
<dbReference type="InterPro" id="IPR019927">
    <property type="entry name" value="Ribosomal_uL3_bac/org-type"/>
</dbReference>
<dbReference type="InterPro" id="IPR019926">
    <property type="entry name" value="Ribosomal_uL3_CS"/>
</dbReference>
<dbReference type="InterPro" id="IPR009000">
    <property type="entry name" value="Transl_B-barrel_sf"/>
</dbReference>
<dbReference type="NCBIfam" id="TIGR03625">
    <property type="entry name" value="L3_bact"/>
    <property type="match status" value="1"/>
</dbReference>
<dbReference type="PANTHER" id="PTHR11229">
    <property type="entry name" value="50S RIBOSOMAL PROTEIN L3"/>
    <property type="match status" value="1"/>
</dbReference>
<dbReference type="PANTHER" id="PTHR11229:SF16">
    <property type="entry name" value="LARGE RIBOSOMAL SUBUNIT PROTEIN UL3C"/>
    <property type="match status" value="1"/>
</dbReference>
<dbReference type="Pfam" id="PF00297">
    <property type="entry name" value="Ribosomal_L3"/>
    <property type="match status" value="1"/>
</dbReference>
<dbReference type="SUPFAM" id="SSF50447">
    <property type="entry name" value="Translation proteins"/>
    <property type="match status" value="1"/>
</dbReference>
<dbReference type="PROSITE" id="PS00474">
    <property type="entry name" value="RIBOSOMAL_L3"/>
    <property type="match status" value="1"/>
</dbReference>
<keyword id="KW-0488">Methylation</keyword>
<keyword id="KW-0687">Ribonucleoprotein</keyword>
<keyword id="KW-0689">Ribosomal protein</keyword>
<keyword id="KW-0694">RNA-binding</keyword>
<keyword id="KW-0699">rRNA-binding</keyword>
<name>RL3_SHEPC</name>
<feature type="chain" id="PRO_1000052138" description="Large ribosomal subunit protein uL3">
    <location>
        <begin position="1"/>
        <end position="212"/>
    </location>
</feature>
<feature type="region of interest" description="Disordered" evidence="2">
    <location>
        <begin position="136"/>
        <end position="157"/>
    </location>
</feature>
<feature type="compositionally biased region" description="Polar residues" evidence="2">
    <location>
        <begin position="136"/>
        <end position="155"/>
    </location>
</feature>
<feature type="modified residue" description="N5-methylglutamine" evidence="1">
    <location>
        <position position="153"/>
    </location>
</feature>
<sequence>MAIGLIGRKVGMTRIFTEDGVSIPVTVIEVAGNRVTQVKTLETDGYRALQVTTGTKKANRITKPEAGHFAKSGVEAGRGLWEVRLEDGEGEGIEVGAELNVDIFADVAKVDVTGQSKGKGFQGGVKRWNFRTQDMTHGNSLSHRSNGSIGQNQTPGRVFKGKKMSGHMGAERVTTQNLVVVRVDVERNLLLVRGAVPGATNGDLIIKPAVKA</sequence>
<comment type="function">
    <text evidence="1">One of the primary rRNA binding proteins, it binds directly near the 3'-end of the 23S rRNA, where it nucleates assembly of the 50S subunit.</text>
</comment>
<comment type="subunit">
    <text evidence="1">Part of the 50S ribosomal subunit. Forms a cluster with proteins L14 and L19.</text>
</comment>
<comment type="PTM">
    <text evidence="1">Methylated by PrmB.</text>
</comment>
<comment type="similarity">
    <text evidence="1">Belongs to the universal ribosomal protein uL3 family.</text>
</comment>
<protein>
    <recommendedName>
        <fullName evidence="1">Large ribosomal subunit protein uL3</fullName>
    </recommendedName>
    <alternativeName>
        <fullName evidence="3">50S ribosomal protein L3</fullName>
    </alternativeName>
</protein>
<proteinExistence type="inferred from homology"/>
<evidence type="ECO:0000255" key="1">
    <source>
        <dbReference type="HAMAP-Rule" id="MF_01325"/>
    </source>
</evidence>
<evidence type="ECO:0000256" key="2">
    <source>
        <dbReference type="SAM" id="MobiDB-lite"/>
    </source>
</evidence>
<evidence type="ECO:0000305" key="3"/>